<keyword id="KW-0238">DNA-binding</keyword>
<keyword id="KW-0371">Homeobox</keyword>
<keyword id="KW-0539">Nucleus</keyword>
<keyword id="KW-1185">Reference proteome</keyword>
<reference key="1">
    <citation type="journal article" date="2001" name="Nature">
        <title>Genome sequence and gene compaction of the eukaryote parasite Encephalitozoon cuniculi.</title>
        <authorList>
            <person name="Katinka M.D."/>
            <person name="Duprat S."/>
            <person name="Cornillot E."/>
            <person name="Metenier G."/>
            <person name="Thomarat F."/>
            <person name="Prensier G."/>
            <person name="Barbe V."/>
            <person name="Peyretaillade E."/>
            <person name="Brottier P."/>
            <person name="Wincker P."/>
            <person name="Delbac F."/>
            <person name="El Alaoui H."/>
            <person name="Peyret P."/>
            <person name="Saurin W."/>
            <person name="Gouy M."/>
            <person name="Weissenbach J."/>
            <person name="Vivares C.P."/>
        </authorList>
    </citation>
    <scope>NUCLEOTIDE SEQUENCE [LARGE SCALE GENOMIC DNA]</scope>
    <source>
        <strain>GB-M1</strain>
    </source>
</reference>
<reference key="2">
    <citation type="journal article" date="2003" name="Dev. Genes Evol.">
        <title>The homeobox genes of Encephalitozoon cuniculi (Microsporidia) reveal a putative mating-type locus.</title>
        <authorList>
            <person name="Buerglin T.R."/>
        </authorList>
    </citation>
    <scope>DISCUSSION OF SEQUENCE</scope>
</reference>
<name>HD4_ENCCU</name>
<comment type="subcellular location">
    <subcellularLocation>
        <location>Nucleus</location>
    </subcellularLocation>
</comment>
<dbReference type="EMBL" id="AL590451">
    <property type="protein sequence ID" value="CAD27070.1"/>
    <property type="molecule type" value="Genomic_DNA"/>
</dbReference>
<dbReference type="EMBL" id="BK001343">
    <property type="protein sequence ID" value="DAA01306.1"/>
    <property type="molecule type" value="Genomic_DNA"/>
</dbReference>
<dbReference type="RefSeq" id="XP_955651.1">
    <property type="nucleotide sequence ID" value="XM_950558.1"/>
</dbReference>
<dbReference type="SMR" id="Q8STR8"/>
<dbReference type="VEuPathDB" id="MicrosporidiaDB:ECU09_0970"/>
<dbReference type="HOGENOM" id="CLU_128308_1_0_1"/>
<dbReference type="InParanoid" id="Q8STR8"/>
<dbReference type="OMA" id="PRWIMEG"/>
<dbReference type="OrthoDB" id="2194933at2759"/>
<dbReference type="Proteomes" id="UP000000819">
    <property type="component" value="Chromosome IX"/>
</dbReference>
<dbReference type="GO" id="GO:0005634">
    <property type="term" value="C:nucleus"/>
    <property type="evidence" value="ECO:0007669"/>
    <property type="project" value="UniProtKB-SubCell"/>
</dbReference>
<dbReference type="GO" id="GO:0000981">
    <property type="term" value="F:DNA-binding transcription factor activity, RNA polymerase II-specific"/>
    <property type="evidence" value="ECO:0007669"/>
    <property type="project" value="InterPro"/>
</dbReference>
<dbReference type="GO" id="GO:0000978">
    <property type="term" value="F:RNA polymerase II cis-regulatory region sequence-specific DNA binding"/>
    <property type="evidence" value="ECO:0007669"/>
    <property type="project" value="TreeGrafter"/>
</dbReference>
<dbReference type="GO" id="GO:0030154">
    <property type="term" value="P:cell differentiation"/>
    <property type="evidence" value="ECO:0007669"/>
    <property type="project" value="TreeGrafter"/>
</dbReference>
<dbReference type="CDD" id="cd00086">
    <property type="entry name" value="homeodomain"/>
    <property type="match status" value="1"/>
</dbReference>
<dbReference type="Gene3D" id="1.10.10.60">
    <property type="entry name" value="Homeodomain-like"/>
    <property type="match status" value="1"/>
</dbReference>
<dbReference type="InterPro" id="IPR001356">
    <property type="entry name" value="HD"/>
</dbReference>
<dbReference type="InterPro" id="IPR017970">
    <property type="entry name" value="Homeobox_CS"/>
</dbReference>
<dbReference type="InterPro" id="IPR051000">
    <property type="entry name" value="Homeobox_DNA-bind_prot"/>
</dbReference>
<dbReference type="InterPro" id="IPR009057">
    <property type="entry name" value="Homeodomain-like_sf"/>
</dbReference>
<dbReference type="PANTHER" id="PTHR24324:SF9">
    <property type="entry name" value="HOMEOBOX DOMAIN-CONTAINING PROTEIN"/>
    <property type="match status" value="1"/>
</dbReference>
<dbReference type="PANTHER" id="PTHR24324">
    <property type="entry name" value="HOMEOBOX PROTEIN HHEX"/>
    <property type="match status" value="1"/>
</dbReference>
<dbReference type="Pfam" id="PF00046">
    <property type="entry name" value="Homeodomain"/>
    <property type="match status" value="1"/>
</dbReference>
<dbReference type="SMART" id="SM00389">
    <property type="entry name" value="HOX"/>
    <property type="match status" value="1"/>
</dbReference>
<dbReference type="SUPFAM" id="SSF46689">
    <property type="entry name" value="Homeodomain-like"/>
    <property type="match status" value="1"/>
</dbReference>
<dbReference type="PROSITE" id="PS00027">
    <property type="entry name" value="HOMEOBOX_1"/>
    <property type="match status" value="1"/>
</dbReference>
<dbReference type="PROSITE" id="PS50071">
    <property type="entry name" value="HOMEOBOX_2"/>
    <property type="match status" value="1"/>
</dbReference>
<proteinExistence type="predicted"/>
<sequence>MKDPRWIMEGEAMAGLVKLRRLSDKSYLGLSGYRYKTHIQVYVLTKIFEITQYPSHDTRQNLAILLNMSPRTIQIWFQNSRSVSRGAAKKKVSKDNGPQEAPKAKIVSNLTVPVKYITWLILSYPSYSQIGN</sequence>
<protein>
    <recommendedName>
        <fullName>Homeobox protein HD-4</fullName>
    </recommendedName>
    <alternativeName>
        <fullName>EcHD-4</fullName>
    </alternativeName>
</protein>
<feature type="chain" id="PRO_0000048913" description="Homeobox protein HD-4">
    <location>
        <begin position="1"/>
        <end position="132"/>
    </location>
</feature>
<feature type="DNA-binding region" description="Homeobox" evidence="1">
    <location>
        <begin position="29"/>
        <end position="88"/>
    </location>
</feature>
<feature type="region of interest" description="Disordered" evidence="2">
    <location>
        <begin position="82"/>
        <end position="101"/>
    </location>
</feature>
<accession>Q8STR8</accession>
<accession>Q7SI86</accession>
<gene>
    <name type="primary">HD-4</name>
    <name type="ordered locus">ECU09_0970</name>
</gene>
<organism>
    <name type="scientific">Encephalitozoon cuniculi (strain GB-M1)</name>
    <name type="common">Microsporidian parasite</name>
    <dbReference type="NCBI Taxonomy" id="284813"/>
    <lineage>
        <taxon>Eukaryota</taxon>
        <taxon>Fungi</taxon>
        <taxon>Fungi incertae sedis</taxon>
        <taxon>Microsporidia</taxon>
        <taxon>Unikaryonidae</taxon>
        <taxon>Encephalitozoon</taxon>
    </lineage>
</organism>
<evidence type="ECO:0000255" key="1">
    <source>
        <dbReference type="PROSITE-ProRule" id="PRU00108"/>
    </source>
</evidence>
<evidence type="ECO:0000256" key="2">
    <source>
        <dbReference type="SAM" id="MobiDB-lite"/>
    </source>
</evidence>